<name>ATG13_PHANO</name>
<organism>
    <name type="scientific">Phaeosphaeria nodorum (strain SN15 / ATCC MYA-4574 / FGSC 10173)</name>
    <name type="common">Glume blotch fungus</name>
    <name type="synonym">Parastagonospora nodorum</name>
    <dbReference type="NCBI Taxonomy" id="321614"/>
    <lineage>
        <taxon>Eukaryota</taxon>
        <taxon>Fungi</taxon>
        <taxon>Dikarya</taxon>
        <taxon>Ascomycota</taxon>
        <taxon>Pezizomycotina</taxon>
        <taxon>Dothideomycetes</taxon>
        <taxon>Pleosporomycetidae</taxon>
        <taxon>Pleosporales</taxon>
        <taxon>Pleosporineae</taxon>
        <taxon>Phaeosphaeriaceae</taxon>
        <taxon>Parastagonospora</taxon>
    </lineage>
</organism>
<evidence type="ECO:0000250" key="1"/>
<evidence type="ECO:0000250" key="2">
    <source>
        <dbReference type="UniProtKB" id="Q06628"/>
    </source>
</evidence>
<evidence type="ECO:0000256" key="3">
    <source>
        <dbReference type="SAM" id="MobiDB-lite"/>
    </source>
</evidence>
<evidence type="ECO:0000305" key="4"/>
<protein>
    <recommendedName>
        <fullName>Autophagy-related protein 13</fullName>
    </recommendedName>
</protein>
<gene>
    <name type="primary">ATG13</name>
    <name type="ORF">SNOG_06190</name>
</gene>
<keyword id="KW-0072">Autophagy</keyword>
<keyword id="KW-0963">Cytoplasm</keyword>
<keyword id="KW-0653">Protein transport</keyword>
<keyword id="KW-0813">Transport</keyword>
<proteinExistence type="inferred from homology"/>
<comment type="function">
    <text evidence="1">Activates the ATG1 kinase in a nutritional condition dependent manner through the TOR pathway, leading to autophagy. Also involved in cytoplasm to vacuole transport (Cvt) and more specifically in Cvt vesicle formation. Seems to play a role in the switching machinery regulating the conversion between the Cvt pathway and autophagy. Finally, ATG13 is also required for glycogen storage during stationary phase (By similarity).</text>
</comment>
<comment type="subunit">
    <text evidence="1">Interacts with ATG1 to form the ATG1-ATG13 kinase complex.</text>
</comment>
<comment type="subcellular location">
    <subcellularLocation>
        <location evidence="2">Cytoplasm</location>
    </subcellularLocation>
    <subcellularLocation>
        <location evidence="2">Preautophagosomal structure</location>
    </subcellularLocation>
</comment>
<comment type="similarity">
    <text evidence="4">Belongs to the ATG13 family. Fungi subfamily.</text>
</comment>
<comment type="sequence caution" evidence="4">
    <conflict type="erroneous gene model prediction">
        <sequence resource="EMBL-CDS" id="EAT86021"/>
    </conflict>
</comment>
<feature type="chain" id="PRO_0000317948" description="Autophagy-related protein 13">
    <location>
        <begin position="1"/>
        <end position="929"/>
    </location>
</feature>
<feature type="region of interest" description="Disordered" evidence="3">
    <location>
        <begin position="1"/>
        <end position="66"/>
    </location>
</feature>
<feature type="region of interest" description="Disordered" evidence="3">
    <location>
        <begin position="342"/>
        <end position="487"/>
    </location>
</feature>
<feature type="region of interest" description="Disordered" evidence="3">
    <location>
        <begin position="503"/>
        <end position="581"/>
    </location>
</feature>
<feature type="region of interest" description="Disordered" evidence="3">
    <location>
        <begin position="600"/>
        <end position="770"/>
    </location>
</feature>
<feature type="region of interest" description="Disordered" evidence="3">
    <location>
        <begin position="808"/>
        <end position="929"/>
    </location>
</feature>
<feature type="compositionally biased region" description="Polar residues" evidence="3">
    <location>
        <begin position="8"/>
        <end position="29"/>
    </location>
</feature>
<feature type="compositionally biased region" description="Basic and acidic residues" evidence="3">
    <location>
        <begin position="55"/>
        <end position="66"/>
    </location>
</feature>
<feature type="compositionally biased region" description="Polar residues" evidence="3">
    <location>
        <begin position="368"/>
        <end position="385"/>
    </location>
</feature>
<feature type="compositionally biased region" description="Polar residues" evidence="3">
    <location>
        <begin position="412"/>
        <end position="437"/>
    </location>
</feature>
<feature type="compositionally biased region" description="Polar residues" evidence="3">
    <location>
        <begin position="476"/>
        <end position="487"/>
    </location>
</feature>
<feature type="compositionally biased region" description="Polar residues" evidence="3">
    <location>
        <begin position="551"/>
        <end position="566"/>
    </location>
</feature>
<feature type="compositionally biased region" description="Basic and acidic residues" evidence="3">
    <location>
        <begin position="600"/>
        <end position="612"/>
    </location>
</feature>
<feature type="compositionally biased region" description="Low complexity" evidence="3">
    <location>
        <begin position="635"/>
        <end position="656"/>
    </location>
</feature>
<feature type="compositionally biased region" description="Basic residues" evidence="3">
    <location>
        <begin position="702"/>
        <end position="714"/>
    </location>
</feature>
<feature type="compositionally biased region" description="Acidic residues" evidence="3">
    <location>
        <begin position="723"/>
        <end position="735"/>
    </location>
</feature>
<feature type="compositionally biased region" description="Polar residues" evidence="3">
    <location>
        <begin position="749"/>
        <end position="761"/>
    </location>
</feature>
<feature type="compositionally biased region" description="Polar residues" evidence="3">
    <location>
        <begin position="830"/>
        <end position="847"/>
    </location>
</feature>
<feature type="compositionally biased region" description="Low complexity" evidence="3">
    <location>
        <begin position="855"/>
        <end position="871"/>
    </location>
</feature>
<feature type="compositionally biased region" description="Low complexity" evidence="3">
    <location>
        <begin position="912"/>
        <end position="929"/>
    </location>
</feature>
<sequence>MNPYQRASPRTASPASNLQTNPTRTNNPRHSADRNSYFDNPPYNDRGSEDGEDDMASRGDHMAETDQRQYQKINQVIQNFFTKSALSIVSSRVILPTSFNKNGDIRQNKWFNVILDDSDELQLRLTEWKTMDAMAGQHPPLYIEVYLDISGLGHKQSLVVHDEDGKRWDVAAALNAAQPTSRASSRPARPTQIVIERWKIYVGDIDSVHPSDLTEPLPNVYKKAVVLFRGLYANLRLLPAFKYNKSMAKQPANHTSLKLNYRILNGASERPQLDTLSLPLCPSTDPITETAHIGSTNSPIGPLCISVEYRDACEFSVEDSESLLSDQFMGLDDTYLEQKPRAAAPVPGSLPVDKLNTQETPDVGQAYGSLSTFHQVGPPTGTSPISALRAARDMPSSSPIETPPQKLPPNHRTAQGSKSSLRSNDTSSFQRRTSVSFQPFKAGSLSSSPAPGPAGPASPSSSLGRPTSAFGRNINIVPNSLNQPRNRTSLNALPQAALRAPSLPNDNAIASSASSSPKPAPITRYSSSFGHRRGKFSTGGSKTEEDALSSGKGSATSSLQRGSDTLNDGEGGSSGEMRSEDDNISDFLKLLEAKKDLKSFNRSDSSTRDATMRKTTAQLGKYQRMRDSHAQLSDSVSSSTMLHRSSSSSSRQLSSVPAMIHGTSISTASSPGKPISPHTPHTPAIPSRLSANSIIEYDQPHRSRNHRSRSRSGRTARGQGPENLEEQSEVEDDAAGIDIPLSPRPWNYQRRSSSVAQQNRNLPEDEPDMFGVRAASLPVEEGDRARDLHRITSTDLTSSGLFAQTESLASASRDNQAPDDGDSRDDLPRASSTSNTPAKRGTYSSNLRGRGGFFSQGSSTTGSTGGTSSTERQSRYNFNSRAANLDDDEPLLFQMSEIGAGGSRRSLEEARGGSSTGSARGRNSPWGGR</sequence>
<reference key="1">
    <citation type="journal article" date="2007" name="Plant Cell">
        <title>Dothideomycete-plant interactions illuminated by genome sequencing and EST analysis of the wheat pathogen Stagonospora nodorum.</title>
        <authorList>
            <person name="Hane J.K."/>
            <person name="Lowe R.G.T."/>
            <person name="Solomon P.S."/>
            <person name="Tan K.-C."/>
            <person name="Schoch C.L."/>
            <person name="Spatafora J.W."/>
            <person name="Crous P.W."/>
            <person name="Kodira C.D."/>
            <person name="Birren B.W."/>
            <person name="Galagan J.E."/>
            <person name="Torriani S.F.F."/>
            <person name="McDonald B.A."/>
            <person name="Oliver R.P."/>
        </authorList>
    </citation>
    <scope>NUCLEOTIDE SEQUENCE [LARGE SCALE GENOMIC DNA]</scope>
    <source>
        <strain>SN15 / ATCC MYA-4574 / FGSC 10173</strain>
    </source>
</reference>
<accession>Q0UPX4</accession>
<dbReference type="EMBL" id="CH445333">
    <property type="protein sequence ID" value="EAT86021.2"/>
    <property type="status" value="ALT_SEQ"/>
    <property type="molecule type" value="Genomic_DNA"/>
</dbReference>
<dbReference type="RefSeq" id="XP_001796572.1">
    <property type="nucleotide sequence ID" value="XM_001796520.1"/>
</dbReference>
<dbReference type="SMR" id="Q0UPX4"/>
<dbReference type="FunCoup" id="Q0UPX4">
    <property type="interactions" value="26"/>
</dbReference>
<dbReference type="STRING" id="321614.Q0UPX4"/>
<dbReference type="GeneID" id="5973451"/>
<dbReference type="KEGG" id="pno:SNOG_06190"/>
<dbReference type="VEuPathDB" id="FungiDB:JI435_061900"/>
<dbReference type="eggNOG" id="KOG4573">
    <property type="taxonomic scope" value="Eukaryota"/>
</dbReference>
<dbReference type="InParanoid" id="Q0UPX4"/>
<dbReference type="OMA" id="FHQVGPT"/>
<dbReference type="OrthoDB" id="70161at2759"/>
<dbReference type="Proteomes" id="UP000001055">
    <property type="component" value="Unassembled WGS sequence"/>
</dbReference>
<dbReference type="GO" id="GO:1990316">
    <property type="term" value="C:Atg1/ULK1 kinase complex"/>
    <property type="evidence" value="ECO:0000318"/>
    <property type="project" value="GO_Central"/>
</dbReference>
<dbReference type="GO" id="GO:0005776">
    <property type="term" value="C:autophagosome"/>
    <property type="evidence" value="ECO:0000318"/>
    <property type="project" value="GO_Central"/>
</dbReference>
<dbReference type="GO" id="GO:0005829">
    <property type="term" value="C:cytosol"/>
    <property type="evidence" value="ECO:0000318"/>
    <property type="project" value="GO_Central"/>
</dbReference>
<dbReference type="GO" id="GO:0000407">
    <property type="term" value="C:phagophore assembly site"/>
    <property type="evidence" value="ECO:0000318"/>
    <property type="project" value="GO_Central"/>
</dbReference>
<dbReference type="GO" id="GO:0019887">
    <property type="term" value="F:protein kinase regulator activity"/>
    <property type="evidence" value="ECO:0000318"/>
    <property type="project" value="GO_Central"/>
</dbReference>
<dbReference type="GO" id="GO:0000423">
    <property type="term" value="P:mitophagy"/>
    <property type="evidence" value="ECO:0000318"/>
    <property type="project" value="GO_Central"/>
</dbReference>
<dbReference type="GO" id="GO:0034727">
    <property type="term" value="P:piecemeal microautophagy of the nucleus"/>
    <property type="evidence" value="ECO:0000318"/>
    <property type="project" value="GO_Central"/>
</dbReference>
<dbReference type="GO" id="GO:0034497">
    <property type="term" value="P:protein localization to phagophore assembly site"/>
    <property type="evidence" value="ECO:0000318"/>
    <property type="project" value="GO_Central"/>
</dbReference>
<dbReference type="GO" id="GO:0015031">
    <property type="term" value="P:protein transport"/>
    <property type="evidence" value="ECO:0007669"/>
    <property type="project" value="UniProtKB-KW"/>
</dbReference>
<dbReference type="Gene3D" id="6.10.140.1900">
    <property type="match status" value="1"/>
</dbReference>
<dbReference type="Gene3D" id="3.30.900.10">
    <property type="entry name" value="HORMA domain"/>
    <property type="match status" value="1"/>
</dbReference>
<dbReference type="InterPro" id="IPR040182">
    <property type="entry name" value="ATG13"/>
</dbReference>
<dbReference type="InterPro" id="IPR018731">
    <property type="entry name" value="Atg13_N"/>
</dbReference>
<dbReference type="InterPro" id="IPR036570">
    <property type="entry name" value="HORMA_dom_sf"/>
</dbReference>
<dbReference type="PANTHER" id="PTHR13430">
    <property type="match status" value="1"/>
</dbReference>
<dbReference type="PANTHER" id="PTHR13430:SF4">
    <property type="entry name" value="AUTOPHAGY-RELATED PROTEIN 13"/>
    <property type="match status" value="1"/>
</dbReference>
<dbReference type="Pfam" id="PF10033">
    <property type="entry name" value="ATG13"/>
    <property type="match status" value="1"/>
</dbReference>